<comment type="catalytic activity">
    <reaction>
        <text>L-homocysteine + L-serine = L,L-cystathionine + H2O</text>
        <dbReference type="Rhea" id="RHEA:10112"/>
        <dbReference type="ChEBI" id="CHEBI:15377"/>
        <dbReference type="ChEBI" id="CHEBI:33384"/>
        <dbReference type="ChEBI" id="CHEBI:58161"/>
        <dbReference type="ChEBI" id="CHEBI:58199"/>
        <dbReference type="EC" id="4.2.1.22"/>
    </reaction>
</comment>
<comment type="cofactor">
    <cofactor evidence="1">
        <name>pyridoxal 5'-phosphate</name>
        <dbReference type="ChEBI" id="CHEBI:597326"/>
    </cofactor>
</comment>
<comment type="similarity">
    <text evidence="2">Belongs to the cysteine synthase/cystathionine beta-synthase family.</text>
</comment>
<name>Y1077_MYCTO</name>
<dbReference type="EC" id="4.2.1.22"/>
<dbReference type="EMBL" id="AE000516">
    <property type="protein sequence ID" value="AAK45364.1"/>
    <property type="molecule type" value="Genomic_DNA"/>
</dbReference>
<dbReference type="PIR" id="C70894">
    <property type="entry name" value="C70894"/>
</dbReference>
<dbReference type="RefSeq" id="WP_003405730.1">
    <property type="nucleotide sequence ID" value="NZ_KK341227.1"/>
</dbReference>
<dbReference type="SMR" id="P9WP50"/>
<dbReference type="KEGG" id="mtc:MT1108"/>
<dbReference type="PATRIC" id="fig|83331.31.peg.1193"/>
<dbReference type="HOGENOM" id="CLU_021018_0_2_11"/>
<dbReference type="Proteomes" id="UP000001020">
    <property type="component" value="Chromosome"/>
</dbReference>
<dbReference type="GO" id="GO:0005737">
    <property type="term" value="C:cytoplasm"/>
    <property type="evidence" value="ECO:0007669"/>
    <property type="project" value="InterPro"/>
</dbReference>
<dbReference type="GO" id="GO:0004122">
    <property type="term" value="F:cystathionine beta-synthase activity"/>
    <property type="evidence" value="ECO:0007669"/>
    <property type="project" value="UniProtKB-EC"/>
</dbReference>
<dbReference type="GO" id="GO:0019343">
    <property type="term" value="P:cysteine biosynthetic process via cystathionine"/>
    <property type="evidence" value="ECO:0007669"/>
    <property type="project" value="InterPro"/>
</dbReference>
<dbReference type="GO" id="GO:0170033">
    <property type="term" value="P:L-amino acid metabolic process"/>
    <property type="evidence" value="ECO:0007669"/>
    <property type="project" value="UniProtKB-ARBA"/>
</dbReference>
<dbReference type="GO" id="GO:0170039">
    <property type="term" value="P:proteinogenic amino acid metabolic process"/>
    <property type="evidence" value="ECO:0007669"/>
    <property type="project" value="UniProtKB-ARBA"/>
</dbReference>
<dbReference type="CDD" id="cd01561">
    <property type="entry name" value="CBS_like"/>
    <property type="match status" value="1"/>
</dbReference>
<dbReference type="CDD" id="cd04608">
    <property type="entry name" value="CBS_pair_CBS"/>
    <property type="match status" value="1"/>
</dbReference>
<dbReference type="FunFam" id="3.40.50.1100:FF:000003">
    <property type="entry name" value="Cystathionine beta-synthase"/>
    <property type="match status" value="1"/>
</dbReference>
<dbReference type="FunFam" id="3.40.50.1100:FF:000118">
    <property type="entry name" value="Related to CYS4-cystathionine beta-synthase"/>
    <property type="match status" value="1"/>
</dbReference>
<dbReference type="Gene3D" id="3.40.50.1100">
    <property type="match status" value="2"/>
</dbReference>
<dbReference type="Gene3D" id="3.10.580.10">
    <property type="entry name" value="CBS-domain"/>
    <property type="match status" value="1"/>
</dbReference>
<dbReference type="InterPro" id="IPR046353">
    <property type="entry name" value="CBS_C"/>
</dbReference>
<dbReference type="InterPro" id="IPR000644">
    <property type="entry name" value="CBS_dom"/>
</dbReference>
<dbReference type="InterPro" id="IPR046342">
    <property type="entry name" value="CBS_dom_sf"/>
</dbReference>
<dbReference type="InterPro" id="IPR050214">
    <property type="entry name" value="Cys_Synth/Cystath_Beta-Synth"/>
</dbReference>
<dbReference type="InterPro" id="IPR005857">
    <property type="entry name" value="Cysta_beta_synth"/>
</dbReference>
<dbReference type="InterPro" id="IPR001926">
    <property type="entry name" value="TrpB-like_PALP"/>
</dbReference>
<dbReference type="InterPro" id="IPR036052">
    <property type="entry name" value="TrpB-like_PALP_sf"/>
</dbReference>
<dbReference type="NCBIfam" id="TIGR01137">
    <property type="entry name" value="cysta_beta"/>
    <property type="match status" value="1"/>
</dbReference>
<dbReference type="PANTHER" id="PTHR10314">
    <property type="entry name" value="CYSTATHIONINE BETA-SYNTHASE"/>
    <property type="match status" value="1"/>
</dbReference>
<dbReference type="Pfam" id="PF00571">
    <property type="entry name" value="CBS"/>
    <property type="match status" value="2"/>
</dbReference>
<dbReference type="Pfam" id="PF00291">
    <property type="entry name" value="PALP"/>
    <property type="match status" value="1"/>
</dbReference>
<dbReference type="SMART" id="SM00116">
    <property type="entry name" value="CBS"/>
    <property type="match status" value="2"/>
</dbReference>
<dbReference type="SUPFAM" id="SSF54631">
    <property type="entry name" value="CBS-domain pair"/>
    <property type="match status" value="1"/>
</dbReference>
<dbReference type="SUPFAM" id="SSF53686">
    <property type="entry name" value="Tryptophan synthase beta subunit-like PLP-dependent enzymes"/>
    <property type="match status" value="1"/>
</dbReference>
<dbReference type="PROSITE" id="PS51371">
    <property type="entry name" value="CBS"/>
    <property type="match status" value="2"/>
</dbReference>
<organism>
    <name type="scientific">Mycobacterium tuberculosis (strain CDC 1551 / Oshkosh)</name>
    <dbReference type="NCBI Taxonomy" id="83331"/>
    <lineage>
        <taxon>Bacteria</taxon>
        <taxon>Bacillati</taxon>
        <taxon>Actinomycetota</taxon>
        <taxon>Actinomycetes</taxon>
        <taxon>Mycobacteriales</taxon>
        <taxon>Mycobacteriaceae</taxon>
        <taxon>Mycobacterium</taxon>
        <taxon>Mycobacterium tuberculosis complex</taxon>
    </lineage>
</organism>
<proteinExistence type="inferred from homology"/>
<keyword id="KW-0456">Lyase</keyword>
<keyword id="KW-0663">Pyridoxal phosphate</keyword>
<keyword id="KW-1185">Reference proteome</keyword>
<reference key="1">
    <citation type="journal article" date="2002" name="J. Bacteriol.">
        <title>Whole-genome comparison of Mycobacterium tuberculosis clinical and laboratory strains.</title>
        <authorList>
            <person name="Fleischmann R.D."/>
            <person name="Alland D."/>
            <person name="Eisen J.A."/>
            <person name="Carpenter L."/>
            <person name="White O."/>
            <person name="Peterson J.D."/>
            <person name="DeBoy R.T."/>
            <person name="Dodson R.J."/>
            <person name="Gwinn M.L."/>
            <person name="Haft D.H."/>
            <person name="Hickey E.K."/>
            <person name="Kolonay J.F."/>
            <person name="Nelson W.C."/>
            <person name="Umayam L.A."/>
            <person name="Ermolaeva M.D."/>
            <person name="Salzberg S.L."/>
            <person name="Delcher A."/>
            <person name="Utterback T.R."/>
            <person name="Weidman J.F."/>
            <person name="Khouri H.M."/>
            <person name="Gill J."/>
            <person name="Mikula A."/>
            <person name="Bishai W."/>
            <person name="Jacobs W.R. Jr."/>
            <person name="Venter J.C."/>
            <person name="Fraser C.M."/>
        </authorList>
    </citation>
    <scope>NUCLEOTIDE SEQUENCE [LARGE SCALE GENOMIC DNA]</scope>
    <source>
        <strain>CDC 1551 / Oshkosh</strain>
    </source>
</reference>
<evidence type="ECO:0000250" key="1"/>
<evidence type="ECO:0000305" key="2"/>
<sequence length="464" mass="48635">MRIAQHISELIGGTPLVRLNSVVPDGAGTVAAKVEYLNPGGSSKDRIAVKMIEAAEASGQLKPGGTIVEPTSGNTGVGLALVAQRRGYKCVFVCPDKVSEDKRNVLIAYGAEVVVCPTAVPPHDPASYYSVSDRLVRDIDGAWKPDQYANPEGPASHYVTTGPEIWADTEGKVTHFVAGIGTGGTITGAGRYLKEVSGGRVRIVGADPEGSVYSGGAGRPYLVEGVGEDFWPAAYDPSVPDEIIAVSDSDSFDMTRRLAREEAMLVGGSCGMAVVAALKVAEEAGPDALIVVLLPDGGRGYMSKIFNDAWMSSYGFLRSRLDGSTEQSTVGDVLRRKSGALPALVHTHPSETVRDAIGILREYGVSQMPVVGAEPPVMAGEVAGSVSERELLSAVFEGRAKLADAVSAHMSPPLRMIGAGELVSAAGKALRDWDALMVVEEGKPVGVITRYDLLGFLSEGAGRR</sequence>
<gene>
    <name type="primary">cbs</name>
    <name type="ordered locus">MT1108</name>
</gene>
<accession>P9WP50</accession>
<accession>L0T8D3</accession>
<accession>Q79FT1</accession>
<accession>Q7D8W0</accession>
<protein>
    <recommendedName>
        <fullName>Putative cystathionine beta-synthase MT1108</fullName>
        <ecNumber>4.2.1.22</ecNumber>
    </recommendedName>
    <alternativeName>
        <fullName>Beta-thionase</fullName>
    </alternativeName>
    <alternativeName>
        <fullName>Serine sulfhydrase</fullName>
    </alternativeName>
</protein>
<feature type="chain" id="PRO_0000427013" description="Putative cystathionine beta-synthase MT1108">
    <location>
        <begin position="1"/>
        <end position="464"/>
    </location>
</feature>
<feature type="binding site" evidence="1">
    <location>
        <position position="74"/>
    </location>
    <ligand>
        <name>pyridoxal 5'-phosphate</name>
        <dbReference type="ChEBI" id="CHEBI:597326"/>
    </ligand>
</feature>
<feature type="binding site" evidence="1">
    <location>
        <position position="269"/>
    </location>
    <ligand>
        <name>pyridoxal 5'-phosphate</name>
        <dbReference type="ChEBI" id="CHEBI:597326"/>
    </ligand>
</feature>
<feature type="modified residue" description="N6-(pyridoxal phosphate)lysine" evidence="1">
    <location>
        <position position="44"/>
    </location>
</feature>